<dbReference type="EC" id="2.7.1.39" evidence="1"/>
<dbReference type="EMBL" id="CP017627">
    <property type="protein sequence ID" value="AOW29508.1"/>
    <property type="molecule type" value="Genomic_DNA"/>
</dbReference>
<dbReference type="EMBL" id="U67193">
    <property type="protein sequence ID" value="AAB08101.1"/>
    <property type="molecule type" value="Genomic_DNA"/>
</dbReference>
<dbReference type="RefSeq" id="XP_716762.2">
    <property type="nucleotide sequence ID" value="XM_711669.2"/>
</dbReference>
<dbReference type="SMR" id="Q92209"/>
<dbReference type="FunCoup" id="Q92209">
    <property type="interactions" value="192"/>
</dbReference>
<dbReference type="STRING" id="237561.Q92209"/>
<dbReference type="EnsemblFungi" id="C5_00650C_A-T">
    <property type="protein sequence ID" value="C5_00650C_A-T-p1"/>
    <property type="gene ID" value="C5_00650C_A"/>
</dbReference>
<dbReference type="GeneID" id="3641572"/>
<dbReference type="KEGG" id="cal:CAALFM_C500650CA"/>
<dbReference type="CGD" id="CAL0000196189">
    <property type="gene designation" value="THR1"/>
</dbReference>
<dbReference type="VEuPathDB" id="FungiDB:C5_00650C_A"/>
<dbReference type="eggNOG" id="KOG1537">
    <property type="taxonomic scope" value="Eukaryota"/>
</dbReference>
<dbReference type="HOGENOM" id="CLU_041243_2_1_1"/>
<dbReference type="InParanoid" id="Q92209"/>
<dbReference type="OMA" id="CANRIPH"/>
<dbReference type="OrthoDB" id="195231at2759"/>
<dbReference type="UniPathway" id="UPA00050">
    <property type="reaction ID" value="UER00064"/>
</dbReference>
<dbReference type="Proteomes" id="UP000000559">
    <property type="component" value="Chromosome 5"/>
</dbReference>
<dbReference type="GO" id="GO:0005524">
    <property type="term" value="F:ATP binding"/>
    <property type="evidence" value="ECO:0007669"/>
    <property type="project" value="UniProtKB-KW"/>
</dbReference>
<dbReference type="GO" id="GO:0004413">
    <property type="term" value="F:homoserine kinase activity"/>
    <property type="evidence" value="ECO:0007669"/>
    <property type="project" value="UniProtKB-EC"/>
</dbReference>
<dbReference type="GO" id="GO:0009092">
    <property type="term" value="P:homoserine metabolic process"/>
    <property type="evidence" value="ECO:0007669"/>
    <property type="project" value="EnsemblFungi"/>
</dbReference>
<dbReference type="GO" id="GO:0009088">
    <property type="term" value="P:threonine biosynthetic process"/>
    <property type="evidence" value="ECO:0000315"/>
    <property type="project" value="UniProtKB"/>
</dbReference>
<dbReference type="FunFam" id="3.30.230.10:FF:000068">
    <property type="entry name" value="Homoserine kinase"/>
    <property type="match status" value="1"/>
</dbReference>
<dbReference type="Gene3D" id="3.30.230.10">
    <property type="match status" value="1"/>
</dbReference>
<dbReference type="Gene3D" id="3.30.70.890">
    <property type="entry name" value="GHMP kinase, C-terminal domain"/>
    <property type="match status" value="1"/>
</dbReference>
<dbReference type="HAMAP" id="MF_00384">
    <property type="entry name" value="Homoser_kinase"/>
    <property type="match status" value="1"/>
</dbReference>
<dbReference type="InterPro" id="IPR036554">
    <property type="entry name" value="GHMP_kinase_C_sf"/>
</dbReference>
<dbReference type="InterPro" id="IPR006204">
    <property type="entry name" value="GHMP_kinase_N_dom"/>
</dbReference>
<dbReference type="InterPro" id="IPR006203">
    <property type="entry name" value="GHMP_knse_ATP-bd_CS"/>
</dbReference>
<dbReference type="InterPro" id="IPR000870">
    <property type="entry name" value="Homoserine_kinase"/>
</dbReference>
<dbReference type="InterPro" id="IPR020568">
    <property type="entry name" value="Ribosomal_Su5_D2-typ_SF"/>
</dbReference>
<dbReference type="InterPro" id="IPR014721">
    <property type="entry name" value="Ribsml_uS5_D2-typ_fold_subgr"/>
</dbReference>
<dbReference type="NCBIfam" id="TIGR00191">
    <property type="entry name" value="thrB"/>
    <property type="match status" value="1"/>
</dbReference>
<dbReference type="PANTHER" id="PTHR20861:SF1">
    <property type="entry name" value="HOMOSERINE KINASE"/>
    <property type="match status" value="1"/>
</dbReference>
<dbReference type="PANTHER" id="PTHR20861">
    <property type="entry name" value="HOMOSERINE/4-DIPHOSPHOCYTIDYL-2-C-METHYL-D-ERYTHRITOL KINASE"/>
    <property type="match status" value="1"/>
</dbReference>
<dbReference type="Pfam" id="PF00288">
    <property type="entry name" value="GHMP_kinases_N"/>
    <property type="match status" value="1"/>
</dbReference>
<dbReference type="PIRSF" id="PIRSF000676">
    <property type="entry name" value="Homoser_kin"/>
    <property type="match status" value="1"/>
</dbReference>
<dbReference type="PRINTS" id="PR00958">
    <property type="entry name" value="HOMSERKINASE"/>
</dbReference>
<dbReference type="SUPFAM" id="SSF55060">
    <property type="entry name" value="GHMP Kinase, C-terminal domain"/>
    <property type="match status" value="1"/>
</dbReference>
<dbReference type="SUPFAM" id="SSF54211">
    <property type="entry name" value="Ribosomal protein S5 domain 2-like"/>
    <property type="match status" value="1"/>
</dbReference>
<dbReference type="PROSITE" id="PS00627">
    <property type="entry name" value="GHMP_KINASES_ATP"/>
    <property type="match status" value="1"/>
</dbReference>
<accession>Q92209</accession>
<accession>A0A1D8PN04</accession>
<accession>Q5A523</accession>
<organism>
    <name type="scientific">Candida albicans (strain SC5314 / ATCC MYA-2876)</name>
    <name type="common">Yeast</name>
    <dbReference type="NCBI Taxonomy" id="237561"/>
    <lineage>
        <taxon>Eukaryota</taxon>
        <taxon>Fungi</taxon>
        <taxon>Dikarya</taxon>
        <taxon>Ascomycota</taxon>
        <taxon>Saccharomycotina</taxon>
        <taxon>Pichiomycetes</taxon>
        <taxon>Debaryomycetaceae</taxon>
        <taxon>Candida/Lodderomyces clade</taxon>
        <taxon>Candida</taxon>
    </lineage>
</organism>
<feature type="chain" id="PRO_0000156654" description="Homoserine kinase">
    <location>
        <begin position="1"/>
        <end position="357"/>
    </location>
</feature>
<feature type="sequence conflict" description="In Ref. 4; AAB08101." evidence="5" ref="4">
    <original>I</original>
    <variation>T</variation>
    <location>
        <position position="4"/>
    </location>
</feature>
<gene>
    <name type="primary">THR1</name>
    <name type="ordered locus">CAALFM_C500650CA</name>
    <name type="ORF">CaO19.923</name>
</gene>
<reference key="1">
    <citation type="journal article" date="2004" name="Proc. Natl. Acad. Sci. U.S.A.">
        <title>The diploid genome sequence of Candida albicans.</title>
        <authorList>
            <person name="Jones T."/>
            <person name="Federspiel N.A."/>
            <person name="Chibana H."/>
            <person name="Dungan J."/>
            <person name="Kalman S."/>
            <person name="Magee B.B."/>
            <person name="Newport G."/>
            <person name="Thorstenson Y.R."/>
            <person name="Agabian N."/>
            <person name="Magee P.T."/>
            <person name="Davis R.W."/>
            <person name="Scherer S."/>
        </authorList>
    </citation>
    <scope>NUCLEOTIDE SEQUENCE [LARGE SCALE GENOMIC DNA]</scope>
    <source>
        <strain>SC5314 / ATCC MYA-2876</strain>
    </source>
</reference>
<reference key="2">
    <citation type="journal article" date="2007" name="Genome Biol.">
        <title>Assembly of the Candida albicans genome into sixteen supercontigs aligned on the eight chromosomes.</title>
        <authorList>
            <person name="van het Hoog M."/>
            <person name="Rast T.J."/>
            <person name="Martchenko M."/>
            <person name="Grindle S."/>
            <person name="Dignard D."/>
            <person name="Hogues H."/>
            <person name="Cuomo C."/>
            <person name="Berriman M."/>
            <person name="Scherer S."/>
            <person name="Magee B.B."/>
            <person name="Whiteway M."/>
            <person name="Chibana H."/>
            <person name="Nantel A."/>
            <person name="Magee P.T."/>
        </authorList>
    </citation>
    <scope>GENOME REANNOTATION</scope>
    <source>
        <strain>SC5314 / ATCC MYA-2876</strain>
    </source>
</reference>
<reference key="3">
    <citation type="journal article" date="2013" name="Genome Biol.">
        <title>Assembly of a phased diploid Candida albicans genome facilitates allele-specific measurements and provides a simple model for repeat and indel structure.</title>
        <authorList>
            <person name="Muzzey D."/>
            <person name="Schwartz K."/>
            <person name="Weissman J.S."/>
            <person name="Sherlock G."/>
        </authorList>
    </citation>
    <scope>NUCLEOTIDE SEQUENCE [LARGE SCALE GENOMIC DNA]</scope>
    <scope>GENOME REANNOTATION</scope>
    <source>
        <strain>SC5314 / ATCC MYA-2876</strain>
    </source>
</reference>
<reference key="4">
    <citation type="submission" date="1996-09" db="EMBL/GenBank/DDBJ databases">
        <authorList>
            <person name="White T.C."/>
        </authorList>
    </citation>
    <scope>NUCLEOTIDE SEQUENCE [GENOMIC DNA] OF 1-147</scope>
    <source>
        <strain>SS</strain>
    </source>
</reference>
<reference key="5">
    <citation type="journal article" date="2010" name="Eukaryot. Cell">
        <title>Homoserine toxicity in Saccharomyces cerevisiae and Candida albicans homoserine kinase (thr1Delta) mutants.</title>
        <authorList>
            <person name="Kingsbury J.M."/>
            <person name="McCusker J.H."/>
        </authorList>
    </citation>
    <scope>DISRUPTION PHENOTYPE</scope>
    <source>
        <strain evidence="4">SC5314 / ATCC MYA-2876</strain>
    </source>
</reference>
<reference key="6">
    <citation type="journal article" date="2010" name="Eukaryot. Cell">
        <title>Fungal homoserine kinase (thr1Delta) mutants are attenuated in virulence and die rapidly upon threonine starvation and serum incubation.</title>
        <authorList>
            <person name="Kingsbury J.M."/>
            <person name="McCusker J.H."/>
        </authorList>
    </citation>
    <scope>FUNCTION</scope>
    <scope>PATHWAY</scope>
    <scope>DISRUPTION PHENOTYPE</scope>
    <source>
        <strain evidence="4">SC5314 / ATCC MYA-2876</strain>
    </source>
</reference>
<keyword id="KW-0028">Amino-acid biosynthesis</keyword>
<keyword id="KW-0067">ATP-binding</keyword>
<keyword id="KW-0418">Kinase</keyword>
<keyword id="KW-0547">Nucleotide-binding</keyword>
<keyword id="KW-1185">Reference proteome</keyword>
<keyword id="KW-0791">Threonine biosynthesis</keyword>
<keyword id="KW-0808">Transferase</keyword>
<sequence>MSVISFKIKVPASSANIGPGFDVLGIGLQLYLTITVTIDPSIDTSSDPHHALLSYEGDGKVPFESNENLITQTALYVMRCNGIKDFPRGTHIHVNNPIPLGRGLGSSASAIVAGVYLGNEIGNLKLDKYRLLDYCLMIERHPDNIAAAMLGGFIGSYLNELSSEDSQLTTVPLDYILPKVKNGELITPQDKIVSQQPPNNIGQYVEYKWNKKIKCLTIIPNFELSTDLSRSVLPKNYQLPDIVYNLQRIAILTTALTQDPPNHKVIYQSMKDKLHQPYRFGLIPGLNTVLQKITPESYPGLCGICLSGAGPTILCLATDGFEKIANDVIEIFKQEGIECDSKLLDLAYDGATVEYGS</sequence>
<name>KHSE_CANAL</name>
<comment type="function">
    <text evidence="3">Commits homoserine to the threonine biosynthesis pathway by catalyzing its O-phosphorylation.</text>
</comment>
<comment type="catalytic activity">
    <reaction evidence="1">
        <text>L-homoserine + ATP = O-phospho-L-homoserine + ADP + H(+)</text>
        <dbReference type="Rhea" id="RHEA:13985"/>
        <dbReference type="ChEBI" id="CHEBI:15378"/>
        <dbReference type="ChEBI" id="CHEBI:30616"/>
        <dbReference type="ChEBI" id="CHEBI:57476"/>
        <dbReference type="ChEBI" id="CHEBI:57590"/>
        <dbReference type="ChEBI" id="CHEBI:456216"/>
        <dbReference type="EC" id="2.7.1.39"/>
    </reaction>
    <physiologicalReaction direction="left-to-right" evidence="1">
        <dbReference type="Rhea" id="RHEA:13986"/>
    </physiologicalReaction>
</comment>
<comment type="pathway">
    <text evidence="3">Amino-acid biosynthesis; L-threonine biosynthesis; L-threonine from L-aspartate: step 4/5.</text>
</comment>
<comment type="subunit">
    <text evidence="1">Homodimer.</text>
</comment>
<comment type="disruption phenotype">
    <text evidence="2 3">Threonine auxotrophy (PubMed:20305003). Leads to accumulation of toxic levels of homoserine (PubMed:20305002, PubMed:20305003). Sensitive to 5-fluorocytosine and sulfometuron methyl (a compound that increases flux through the threonine biosynthetic pathway) (PubMed:20305002, PubMed:20305003). Decreases survival in a mouse model of infection (PubMed:20305003).</text>
</comment>
<comment type="similarity">
    <text evidence="5">Belongs to the GHMP kinase family. Homoserine kinase subfamily.</text>
</comment>
<protein>
    <recommendedName>
        <fullName>Homoserine kinase</fullName>
        <shortName>HK</shortName>
        <shortName>HSK</shortName>
        <ecNumber evidence="1">2.7.1.39</ecNumber>
    </recommendedName>
</protein>
<proteinExistence type="inferred from homology"/>
<evidence type="ECO:0000250" key="1">
    <source>
        <dbReference type="UniProtKB" id="P17423"/>
    </source>
</evidence>
<evidence type="ECO:0000269" key="2">
    <source>
    </source>
</evidence>
<evidence type="ECO:0000269" key="3">
    <source>
    </source>
</evidence>
<evidence type="ECO:0000303" key="4">
    <source>
    </source>
</evidence>
<evidence type="ECO:0000305" key="5"/>